<organism>
    <name type="scientific">Listeria monocytogenes serovar 1/2a (strain ATCC BAA-679 / EGD-e)</name>
    <dbReference type="NCBI Taxonomy" id="169963"/>
    <lineage>
        <taxon>Bacteria</taxon>
        <taxon>Bacillati</taxon>
        <taxon>Bacillota</taxon>
        <taxon>Bacilli</taxon>
        <taxon>Bacillales</taxon>
        <taxon>Listeriaceae</taxon>
        <taxon>Listeria</taxon>
    </lineage>
</organism>
<evidence type="ECO:0000255" key="1">
    <source>
        <dbReference type="HAMAP-Rule" id="MF_00158"/>
    </source>
</evidence>
<accession>Q8Y602</accession>
<comment type="function">
    <text evidence="1">Catalyzes the condensation of pantoate with beta-alanine in an ATP-dependent reaction via a pantoyl-adenylate intermediate.</text>
</comment>
<comment type="catalytic activity">
    <reaction evidence="1">
        <text>(R)-pantoate + beta-alanine + ATP = (R)-pantothenate + AMP + diphosphate + H(+)</text>
        <dbReference type="Rhea" id="RHEA:10912"/>
        <dbReference type="ChEBI" id="CHEBI:15378"/>
        <dbReference type="ChEBI" id="CHEBI:15980"/>
        <dbReference type="ChEBI" id="CHEBI:29032"/>
        <dbReference type="ChEBI" id="CHEBI:30616"/>
        <dbReference type="ChEBI" id="CHEBI:33019"/>
        <dbReference type="ChEBI" id="CHEBI:57966"/>
        <dbReference type="ChEBI" id="CHEBI:456215"/>
        <dbReference type="EC" id="6.3.2.1"/>
    </reaction>
</comment>
<comment type="pathway">
    <text evidence="1">Cofactor biosynthesis; (R)-pantothenate biosynthesis; (R)-pantothenate from (R)-pantoate and beta-alanine: step 1/1.</text>
</comment>
<comment type="subunit">
    <text evidence="1">Homodimer.</text>
</comment>
<comment type="subcellular location">
    <subcellularLocation>
        <location evidence="1">Cytoplasm</location>
    </subcellularLocation>
</comment>
<comment type="miscellaneous">
    <text evidence="1">The reaction proceeds by a bi uni uni bi ping pong mechanism.</text>
</comment>
<comment type="similarity">
    <text evidence="1">Belongs to the pantothenate synthetase family.</text>
</comment>
<keyword id="KW-0067">ATP-binding</keyword>
<keyword id="KW-0963">Cytoplasm</keyword>
<keyword id="KW-0436">Ligase</keyword>
<keyword id="KW-0547">Nucleotide-binding</keyword>
<keyword id="KW-0566">Pantothenate biosynthesis</keyword>
<keyword id="KW-1185">Reference proteome</keyword>
<proteinExistence type="inferred from homology"/>
<gene>
    <name evidence="1" type="primary">panC</name>
    <name type="ordered locus">lmo1901</name>
</gene>
<protein>
    <recommendedName>
        <fullName evidence="1">Pantothenate synthetase</fullName>
        <shortName evidence="1">PS</shortName>
        <ecNumber evidence="1">6.3.2.1</ecNumber>
    </recommendedName>
    <alternativeName>
        <fullName evidence="1">Pantoate--beta-alanine ligase</fullName>
    </alternativeName>
    <alternativeName>
        <fullName evidence="1">Pantoate-activating enzyme</fullName>
    </alternativeName>
</protein>
<name>PANC_LISMO</name>
<dbReference type="EC" id="6.3.2.1" evidence="1"/>
<dbReference type="EMBL" id="AL591981">
    <property type="protein sequence ID" value="CAC99979.1"/>
    <property type="molecule type" value="Genomic_DNA"/>
</dbReference>
<dbReference type="PIR" id="AE1312">
    <property type="entry name" value="AE1312"/>
</dbReference>
<dbReference type="RefSeq" id="NP_465425.1">
    <property type="nucleotide sequence ID" value="NC_003210.1"/>
</dbReference>
<dbReference type="RefSeq" id="WP_003723011.1">
    <property type="nucleotide sequence ID" value="NZ_CP149495.1"/>
</dbReference>
<dbReference type="SMR" id="Q8Y602"/>
<dbReference type="STRING" id="169963.gene:17594586"/>
<dbReference type="PaxDb" id="169963-lmo1901"/>
<dbReference type="EnsemblBacteria" id="CAC99979">
    <property type="protein sequence ID" value="CAC99979"/>
    <property type="gene ID" value="CAC99979"/>
</dbReference>
<dbReference type="GeneID" id="985788"/>
<dbReference type="KEGG" id="lmo:lmo1901"/>
<dbReference type="PATRIC" id="fig|169963.11.peg.1947"/>
<dbReference type="eggNOG" id="COG0414">
    <property type="taxonomic scope" value="Bacteria"/>
</dbReference>
<dbReference type="HOGENOM" id="CLU_047148_0_0_9"/>
<dbReference type="OrthoDB" id="9773087at2"/>
<dbReference type="PhylomeDB" id="Q8Y602"/>
<dbReference type="BioCyc" id="LMON169963:LMO1901-MONOMER"/>
<dbReference type="UniPathway" id="UPA00028">
    <property type="reaction ID" value="UER00005"/>
</dbReference>
<dbReference type="Proteomes" id="UP000000817">
    <property type="component" value="Chromosome"/>
</dbReference>
<dbReference type="GO" id="GO:0005829">
    <property type="term" value="C:cytosol"/>
    <property type="evidence" value="ECO:0000318"/>
    <property type="project" value="GO_Central"/>
</dbReference>
<dbReference type="GO" id="GO:0005524">
    <property type="term" value="F:ATP binding"/>
    <property type="evidence" value="ECO:0007669"/>
    <property type="project" value="UniProtKB-KW"/>
</dbReference>
<dbReference type="GO" id="GO:0004592">
    <property type="term" value="F:pantoate-beta-alanine ligase activity"/>
    <property type="evidence" value="ECO:0000318"/>
    <property type="project" value="GO_Central"/>
</dbReference>
<dbReference type="GO" id="GO:0015940">
    <property type="term" value="P:pantothenate biosynthetic process"/>
    <property type="evidence" value="ECO:0000318"/>
    <property type="project" value="GO_Central"/>
</dbReference>
<dbReference type="CDD" id="cd00560">
    <property type="entry name" value="PanC"/>
    <property type="match status" value="1"/>
</dbReference>
<dbReference type="FunFam" id="3.30.1300.10:FF:000001">
    <property type="entry name" value="Pantothenate synthetase"/>
    <property type="match status" value="1"/>
</dbReference>
<dbReference type="FunFam" id="3.40.50.620:FF:000013">
    <property type="entry name" value="Pantothenate synthetase"/>
    <property type="match status" value="1"/>
</dbReference>
<dbReference type="Gene3D" id="3.40.50.620">
    <property type="entry name" value="HUPs"/>
    <property type="match status" value="1"/>
</dbReference>
<dbReference type="Gene3D" id="3.30.1300.10">
    <property type="entry name" value="Pantoate-beta-alanine ligase, C-terminal domain"/>
    <property type="match status" value="1"/>
</dbReference>
<dbReference type="HAMAP" id="MF_00158">
    <property type="entry name" value="PanC"/>
    <property type="match status" value="1"/>
</dbReference>
<dbReference type="InterPro" id="IPR004821">
    <property type="entry name" value="Cyt_trans-like"/>
</dbReference>
<dbReference type="InterPro" id="IPR003721">
    <property type="entry name" value="Pantoate_ligase"/>
</dbReference>
<dbReference type="InterPro" id="IPR042176">
    <property type="entry name" value="Pantoate_ligase_C"/>
</dbReference>
<dbReference type="InterPro" id="IPR014729">
    <property type="entry name" value="Rossmann-like_a/b/a_fold"/>
</dbReference>
<dbReference type="NCBIfam" id="TIGR00125">
    <property type="entry name" value="cyt_tran_rel"/>
    <property type="match status" value="1"/>
</dbReference>
<dbReference type="NCBIfam" id="TIGR00018">
    <property type="entry name" value="panC"/>
    <property type="match status" value="1"/>
</dbReference>
<dbReference type="PANTHER" id="PTHR21299">
    <property type="entry name" value="CYTIDYLATE KINASE/PANTOATE-BETA-ALANINE LIGASE"/>
    <property type="match status" value="1"/>
</dbReference>
<dbReference type="PANTHER" id="PTHR21299:SF1">
    <property type="entry name" value="PANTOATE--BETA-ALANINE LIGASE"/>
    <property type="match status" value="1"/>
</dbReference>
<dbReference type="Pfam" id="PF02569">
    <property type="entry name" value="Pantoate_ligase"/>
    <property type="match status" value="1"/>
</dbReference>
<dbReference type="SUPFAM" id="SSF52374">
    <property type="entry name" value="Nucleotidylyl transferase"/>
    <property type="match status" value="1"/>
</dbReference>
<sequence length="285" mass="32129">MLIIRNKQELKEVILKQKQANKTIGFVPTMGFLHEGHMTLVSHARKESDFVVMSVFVNPTQFGPNEDFDAYPRDEAHDAKLAEEGGVDILFVPTVEEIYPTELSTKLHVDKRVSVLDGADREGHFDGVVTVLTKLFHLVSPDNAYFGQKDAQQVAVVSGLVEDYFFPVNLRIIATVREADGLAKSSRNVYLTEKERKEAPVIHEALQLGRKLIESGETNQAKIVQMMTEKINEQTSHELIAYLAIYSYPEFTPVTDWSKGIIIAAAVKYSKARLIDNELINVKRR</sequence>
<reference key="1">
    <citation type="journal article" date="2001" name="Science">
        <title>Comparative genomics of Listeria species.</title>
        <authorList>
            <person name="Glaser P."/>
            <person name="Frangeul L."/>
            <person name="Buchrieser C."/>
            <person name="Rusniok C."/>
            <person name="Amend A."/>
            <person name="Baquero F."/>
            <person name="Berche P."/>
            <person name="Bloecker H."/>
            <person name="Brandt P."/>
            <person name="Chakraborty T."/>
            <person name="Charbit A."/>
            <person name="Chetouani F."/>
            <person name="Couve E."/>
            <person name="de Daruvar A."/>
            <person name="Dehoux P."/>
            <person name="Domann E."/>
            <person name="Dominguez-Bernal G."/>
            <person name="Duchaud E."/>
            <person name="Durant L."/>
            <person name="Dussurget O."/>
            <person name="Entian K.-D."/>
            <person name="Fsihi H."/>
            <person name="Garcia-del Portillo F."/>
            <person name="Garrido P."/>
            <person name="Gautier L."/>
            <person name="Goebel W."/>
            <person name="Gomez-Lopez N."/>
            <person name="Hain T."/>
            <person name="Hauf J."/>
            <person name="Jackson D."/>
            <person name="Jones L.-M."/>
            <person name="Kaerst U."/>
            <person name="Kreft J."/>
            <person name="Kuhn M."/>
            <person name="Kunst F."/>
            <person name="Kurapkat G."/>
            <person name="Madueno E."/>
            <person name="Maitournam A."/>
            <person name="Mata Vicente J."/>
            <person name="Ng E."/>
            <person name="Nedjari H."/>
            <person name="Nordsiek G."/>
            <person name="Novella S."/>
            <person name="de Pablos B."/>
            <person name="Perez-Diaz J.-C."/>
            <person name="Purcell R."/>
            <person name="Remmel B."/>
            <person name="Rose M."/>
            <person name="Schlueter T."/>
            <person name="Simoes N."/>
            <person name="Tierrez A."/>
            <person name="Vazquez-Boland J.-A."/>
            <person name="Voss H."/>
            <person name="Wehland J."/>
            <person name="Cossart P."/>
        </authorList>
    </citation>
    <scope>NUCLEOTIDE SEQUENCE [LARGE SCALE GENOMIC DNA]</scope>
    <source>
        <strain>ATCC BAA-679 / EGD-e</strain>
    </source>
</reference>
<feature type="chain" id="PRO_0000128239" description="Pantothenate synthetase">
    <location>
        <begin position="1"/>
        <end position="285"/>
    </location>
</feature>
<feature type="active site" description="Proton donor" evidence="1">
    <location>
        <position position="37"/>
    </location>
</feature>
<feature type="binding site" evidence="1">
    <location>
        <begin position="30"/>
        <end position="37"/>
    </location>
    <ligand>
        <name>ATP</name>
        <dbReference type="ChEBI" id="CHEBI:30616"/>
    </ligand>
</feature>
<feature type="binding site" evidence="1">
    <location>
        <position position="61"/>
    </location>
    <ligand>
        <name>(R)-pantoate</name>
        <dbReference type="ChEBI" id="CHEBI:15980"/>
    </ligand>
</feature>
<feature type="binding site" evidence="1">
    <location>
        <position position="61"/>
    </location>
    <ligand>
        <name>beta-alanine</name>
        <dbReference type="ChEBI" id="CHEBI:57966"/>
    </ligand>
</feature>
<feature type="binding site" evidence="1">
    <location>
        <begin position="147"/>
        <end position="150"/>
    </location>
    <ligand>
        <name>ATP</name>
        <dbReference type="ChEBI" id="CHEBI:30616"/>
    </ligand>
</feature>
<feature type="binding site" evidence="1">
    <location>
        <position position="153"/>
    </location>
    <ligand>
        <name>(R)-pantoate</name>
        <dbReference type="ChEBI" id="CHEBI:15980"/>
    </ligand>
</feature>
<feature type="binding site" evidence="1">
    <location>
        <position position="176"/>
    </location>
    <ligand>
        <name>ATP</name>
        <dbReference type="ChEBI" id="CHEBI:30616"/>
    </ligand>
</feature>
<feature type="binding site" evidence="1">
    <location>
        <begin position="184"/>
        <end position="187"/>
    </location>
    <ligand>
        <name>ATP</name>
        <dbReference type="ChEBI" id="CHEBI:30616"/>
    </ligand>
</feature>